<feature type="chain" id="PRO_0000455247" description="Zinc finger protein ztf-7">
    <location>
        <begin position="1"/>
        <end position="614"/>
    </location>
</feature>
<feature type="zinc finger region" description="C2H2-type 1" evidence="2">
    <location>
        <begin position="356"/>
        <end position="380"/>
    </location>
</feature>
<feature type="zinc finger region" description="C2H2-type 2" evidence="2">
    <location>
        <begin position="447"/>
        <end position="470"/>
    </location>
</feature>
<feature type="region of interest" description="Disordered" evidence="3">
    <location>
        <begin position="1"/>
        <end position="160"/>
    </location>
</feature>
<feature type="compositionally biased region" description="Gly residues" evidence="3">
    <location>
        <begin position="1"/>
        <end position="10"/>
    </location>
</feature>
<feature type="compositionally biased region" description="Polar residues" evidence="3">
    <location>
        <begin position="18"/>
        <end position="41"/>
    </location>
</feature>
<feature type="compositionally biased region" description="Low complexity" evidence="3">
    <location>
        <begin position="54"/>
        <end position="69"/>
    </location>
</feature>
<feature type="compositionally biased region" description="Basic and acidic residues" evidence="3">
    <location>
        <begin position="74"/>
        <end position="83"/>
    </location>
</feature>
<feature type="compositionally biased region" description="Acidic residues" evidence="3">
    <location>
        <begin position="132"/>
        <end position="150"/>
    </location>
</feature>
<feature type="mutagenesis site" description="In ust117; lack of cold-warm shock-induced translocation of exosome components from the nucleolus to the nucleoplasm." evidence="5">
    <location>
        <begin position="437"/>
        <end position="614"/>
    </location>
</feature>
<organism evidence="7">
    <name type="scientific">Caenorhabditis elegans</name>
    <dbReference type="NCBI Taxonomy" id="6239"/>
    <lineage>
        <taxon>Eukaryota</taxon>
        <taxon>Metazoa</taxon>
        <taxon>Ecdysozoa</taxon>
        <taxon>Nematoda</taxon>
        <taxon>Chromadorea</taxon>
        <taxon>Rhabditida</taxon>
        <taxon>Rhabditina</taxon>
        <taxon>Rhabditomorpha</taxon>
        <taxon>Rhabditoidea</taxon>
        <taxon>Rhabditidae</taxon>
        <taxon>Peloderinae</taxon>
        <taxon>Caenorhabditis</taxon>
    </lineage>
</organism>
<comment type="function">
    <text evidence="1 5">Probable transcription factor (By similarity). Limits the ability to tolerate cold environment or cold-warm stress (PubMed:36763670). In complex with rps-2, mediates the cold-warm shock response by promoting translocation of components of the RNA exosome from the nucleolus to nucleoplasm (PubMed:36763670).</text>
</comment>
<comment type="subunit">
    <text evidence="5">Interacts with rps-2.</text>
</comment>
<comment type="subcellular location">
    <subcellularLocation>
        <location evidence="5">Cytoplasm</location>
    </subcellularLocation>
    <text evidence="5">Cold-warm shock does not alter the subcellular localization.</text>
</comment>
<comment type="induction">
    <text evidence="4">By microRNA let-7; probably by direct interaction.</text>
</comment>
<comment type="disruption phenotype">
    <text evidence="4">RNAi-mediated knockdown suppresses lethality and sterility caused by let-7 mutant background.</text>
</comment>
<comment type="similarity">
    <text evidence="6">Belongs to the ZNF277 family.</text>
</comment>
<dbReference type="EMBL" id="BX284605">
    <property type="protein sequence ID" value="CAA94823.1"/>
    <property type="molecule type" value="Genomic_DNA"/>
</dbReference>
<dbReference type="PIR" id="T22289">
    <property type="entry name" value="T22289"/>
</dbReference>
<dbReference type="RefSeq" id="NP_505526.1">
    <property type="nucleotide sequence ID" value="NM_073125.7"/>
</dbReference>
<dbReference type="SMR" id="Q20448"/>
<dbReference type="DIP" id="DIP-26862N"/>
<dbReference type="FunCoup" id="Q20448">
    <property type="interactions" value="2288"/>
</dbReference>
<dbReference type="STRING" id="6239.F46B6.7.1"/>
<dbReference type="PaxDb" id="6239-F46B6.7.1"/>
<dbReference type="PeptideAtlas" id="Q20448"/>
<dbReference type="EnsemblMetazoa" id="F46B6.7.1">
    <property type="protein sequence ID" value="F46B6.7.1"/>
    <property type="gene ID" value="WBGene00009772"/>
</dbReference>
<dbReference type="EnsemblMetazoa" id="F46B6.7.2">
    <property type="protein sequence ID" value="F46B6.7.2"/>
    <property type="gene ID" value="WBGene00009772"/>
</dbReference>
<dbReference type="GeneID" id="179375"/>
<dbReference type="KEGG" id="cel:CELE_F46B6.7"/>
<dbReference type="UCSC" id="F46B6.7.1">
    <property type="organism name" value="c. elegans"/>
</dbReference>
<dbReference type="AGR" id="WB:WBGene00009772"/>
<dbReference type="CTD" id="179375"/>
<dbReference type="WormBase" id="F46B6.7">
    <property type="protein sequence ID" value="CE05873"/>
    <property type="gene ID" value="WBGene00009772"/>
    <property type="gene designation" value="ztf-7"/>
</dbReference>
<dbReference type="eggNOG" id="KOG2482">
    <property type="taxonomic scope" value="Eukaryota"/>
</dbReference>
<dbReference type="GeneTree" id="ENSGT00390000010852"/>
<dbReference type="HOGENOM" id="CLU_026665_0_0_1"/>
<dbReference type="InParanoid" id="Q20448"/>
<dbReference type="OMA" id="TLMDHMR"/>
<dbReference type="OrthoDB" id="278606at2759"/>
<dbReference type="PhylomeDB" id="Q20448"/>
<dbReference type="PRO" id="PR:Q20448"/>
<dbReference type="Proteomes" id="UP000001940">
    <property type="component" value="Chromosome V"/>
</dbReference>
<dbReference type="Bgee" id="WBGene00009772">
    <property type="expression patterns" value="Expressed in pharyngeal muscle cell (C elegans) and 4 other cell types or tissues"/>
</dbReference>
<dbReference type="GO" id="GO:0005737">
    <property type="term" value="C:cytoplasm"/>
    <property type="evidence" value="ECO:0007669"/>
    <property type="project" value="UniProtKB-SubCell"/>
</dbReference>
<dbReference type="GO" id="GO:0008270">
    <property type="term" value="F:zinc ion binding"/>
    <property type="evidence" value="ECO:0007669"/>
    <property type="project" value="UniProtKB-KW"/>
</dbReference>
<dbReference type="InterPro" id="IPR041661">
    <property type="entry name" value="ZN622/Rei1/Reh1_Znf-C2H2"/>
</dbReference>
<dbReference type="InterPro" id="IPR040048">
    <property type="entry name" value="ZNF277"/>
</dbReference>
<dbReference type="InterPro" id="IPR036236">
    <property type="entry name" value="Znf_C2H2_sf"/>
</dbReference>
<dbReference type="InterPro" id="IPR013087">
    <property type="entry name" value="Znf_C2H2_type"/>
</dbReference>
<dbReference type="PANTHER" id="PTHR13267">
    <property type="entry name" value="ZINC FINGER PROTEIN 277"/>
    <property type="match status" value="1"/>
</dbReference>
<dbReference type="PANTHER" id="PTHR13267:SF3">
    <property type="entry name" value="ZINC FINGER PROTEIN 277"/>
    <property type="match status" value="1"/>
</dbReference>
<dbReference type="Pfam" id="PF12756">
    <property type="entry name" value="zf-C2H2_2"/>
    <property type="match status" value="2"/>
</dbReference>
<dbReference type="SMART" id="SM00355">
    <property type="entry name" value="ZnF_C2H2"/>
    <property type="match status" value="4"/>
</dbReference>
<dbReference type="SUPFAM" id="SSF57667">
    <property type="entry name" value="beta-beta-alpha zinc fingers"/>
    <property type="match status" value="2"/>
</dbReference>
<dbReference type="PROSITE" id="PS00028">
    <property type="entry name" value="ZINC_FINGER_C2H2_1"/>
    <property type="match status" value="1"/>
</dbReference>
<dbReference type="PROSITE" id="PS50157">
    <property type="entry name" value="ZINC_FINGER_C2H2_2"/>
    <property type="match status" value="1"/>
</dbReference>
<keyword id="KW-0963">Cytoplasm</keyword>
<keyword id="KW-0479">Metal-binding</keyword>
<keyword id="KW-1185">Reference proteome</keyword>
<keyword id="KW-0677">Repeat</keyword>
<keyword id="KW-0804">Transcription</keyword>
<keyword id="KW-0805">Transcription regulation</keyword>
<keyword id="KW-0862">Zinc</keyword>
<keyword id="KW-0863">Zinc-finger</keyword>
<name>ZTF7_CAEEL</name>
<evidence type="ECO:0000250" key="1">
    <source>
        <dbReference type="UniProtKB" id="E9Q6D6"/>
    </source>
</evidence>
<evidence type="ECO:0000255" key="2">
    <source>
        <dbReference type="PROSITE-ProRule" id="PRU00042"/>
    </source>
</evidence>
<evidence type="ECO:0000256" key="3">
    <source>
        <dbReference type="SAM" id="MobiDB-lite"/>
    </source>
</evidence>
<evidence type="ECO:0000269" key="4">
    <source>
    </source>
</evidence>
<evidence type="ECO:0000269" key="5">
    <source>
    </source>
</evidence>
<evidence type="ECO:0000305" key="6"/>
<evidence type="ECO:0000312" key="7">
    <source>
        <dbReference type="Proteomes" id="UP000001940"/>
    </source>
</evidence>
<evidence type="ECO:0000312" key="8">
    <source>
        <dbReference type="WormBase" id="F46B6.7"/>
    </source>
</evidence>
<accession>Q20448</accession>
<sequence length="614" mass="71114">MSTSGSGGGNTPDLSKENVASSPNANPKKNADTESSGGSKNNRQRRRSNTKGDGSNSRNGSRTNSVSNSKNQSNRKDWTDRKSFSQGGINVKSKSPGDDHKRTRSSNSQSAKRNARDSTRTMSQASNGEGLDYSDEYELDEPFSDSDDEDSRPKKPEKMSLTVARGRIRTLSGTVPVVGYSPRWGGPTMCVSCLEFFDLPEQISGFADHLLKEHKIVVSEMNLIVDPKRYIEHWRQRFAKESIDKIFPRIEPSEGDSYFGETDYYYLMSENVAEDRSLRQRLAMRRLEEALQCQQREREDTSFQLQCIFCRYNARGNRSKIIHHLYMIHHLNLGSPDNLVFVTEYIEHLKEKLHRNECIYCEKIFPDRNTLMDHMRKRNHREVNPKNHYYDKFYIINYLELGKRWLDVLAEDFEDTMPTFQDSDEEEEDNEWCEWQEDNLDADETRVVCLLCDASEDNAQSLLEHMKTTHEFDLLKNVSDDKLNSYQRLRLINYIRKQNYHADCWVCQKTEFENPLALQKHILEHKPLSHLPDASIWDTEENLVPIFGNDHFLWMLESILEENEITCSSDDEGESEERFSKLVLESKSNTVEGVIAEDLPELSELNEDDLNALM</sequence>
<gene>
    <name evidence="8" type="primary">ztf-7</name>
    <name evidence="8" type="ORF">F46B6.7</name>
</gene>
<proteinExistence type="evidence at protein level"/>
<reference evidence="7" key="1">
    <citation type="journal article" date="1998" name="Science">
        <title>Genome sequence of the nematode C. elegans: a platform for investigating biology.</title>
        <authorList>
            <consortium name="The C. elegans sequencing consortium"/>
        </authorList>
    </citation>
    <scope>NUCLEOTIDE SEQUENCE [LARGE SCALE GENOMIC DNA]</scope>
    <source>
        <strain evidence="7">Bristol N2</strain>
    </source>
</reference>
<reference evidence="6" key="2">
    <citation type="journal article" date="2010" name="Nat. Methods">
        <title>A quantitative targeted proteomics approach to validate predicted microRNA targets in C. elegans.</title>
        <authorList>
            <person name="Jovanovic M."/>
            <person name="Reiter L."/>
            <person name="Picotti P."/>
            <person name="Lange V."/>
            <person name="Bogan E."/>
            <person name="Hurschler B.A."/>
            <person name="Blenkiron C."/>
            <person name="Lehrbach N.J."/>
            <person name="Ding X.C."/>
            <person name="Weiss M."/>
            <person name="Schrimpf S.P."/>
            <person name="Miska E.A."/>
            <person name="Grosshans H."/>
            <person name="Aebersold R."/>
            <person name="Hengartner M.O."/>
        </authorList>
    </citation>
    <scope>INDUCTION BY LET-7</scope>
    <scope>DISRUPTION PHENOTYPE</scope>
</reference>
<reference key="3">
    <citation type="journal article" date="2023" name="PLoS Genet.">
        <title>A ZTF-7/RPS-2 complex mediates the cold-warm response in C. elegans.</title>
        <authorList>
            <person name="Xu T."/>
            <person name="Liao S."/>
            <person name="Huang M."/>
            <person name="Zhu C."/>
            <person name="Huang X."/>
            <person name="Jin Q."/>
            <person name="Xu D."/>
            <person name="Fu C."/>
            <person name="Chen X."/>
            <person name="Feng X."/>
            <person name="Guang S."/>
        </authorList>
    </citation>
    <scope>FUNCTION</scope>
    <scope>INTERACTION WITH RPS-2</scope>
    <scope>SUBCELLULAR LOCATION</scope>
    <scope>MUTAGENESIS OF 437-GLU--MET-614</scope>
</reference>
<protein>
    <recommendedName>
        <fullName evidence="6">Zinc finger protein ztf-7</fullName>
    </recommendedName>
    <alternativeName>
        <fullName evidence="8">Zinc finger putative transcription factor family 7</fullName>
    </alternativeName>
</protein>